<feature type="chain" id="PRO_1000003829" description="Nucleoid-associated protein SG0690">
    <location>
        <begin position="1"/>
        <end position="109"/>
    </location>
</feature>
<feature type="region of interest" description="Disordered" evidence="2">
    <location>
        <begin position="1"/>
        <end position="23"/>
    </location>
</feature>
<keyword id="KW-0963">Cytoplasm</keyword>
<keyword id="KW-0238">DNA-binding</keyword>
<gene>
    <name type="ordered locus">SG0690</name>
</gene>
<protein>
    <recommendedName>
        <fullName evidence="1">Nucleoid-associated protein SG0690</fullName>
    </recommendedName>
</protein>
<accession>Q2NV60</accession>
<name>Y690_SODGM</name>
<comment type="function">
    <text evidence="1">Binds to DNA and alters its conformation. May be involved in regulation of gene expression, nucleoid organization and DNA protection.</text>
</comment>
<comment type="subunit">
    <text evidence="1">Homodimer.</text>
</comment>
<comment type="subcellular location">
    <subcellularLocation>
        <location evidence="1">Cytoplasm</location>
        <location evidence="1">Nucleoid</location>
    </subcellularLocation>
</comment>
<comment type="similarity">
    <text evidence="1">Belongs to the YbaB/EbfC family.</text>
</comment>
<proteinExistence type="inferred from homology"/>
<evidence type="ECO:0000255" key="1">
    <source>
        <dbReference type="HAMAP-Rule" id="MF_00274"/>
    </source>
</evidence>
<evidence type="ECO:0000256" key="2">
    <source>
        <dbReference type="SAM" id="MobiDB-lite"/>
    </source>
</evidence>
<organism>
    <name type="scientific">Sodalis glossinidius (strain morsitans)</name>
    <dbReference type="NCBI Taxonomy" id="343509"/>
    <lineage>
        <taxon>Bacteria</taxon>
        <taxon>Pseudomonadati</taxon>
        <taxon>Pseudomonadota</taxon>
        <taxon>Gammaproteobacteria</taxon>
        <taxon>Enterobacterales</taxon>
        <taxon>Bruguierivoracaceae</taxon>
        <taxon>Sodalis</taxon>
    </lineage>
</organism>
<sequence>MFGKGGMGNLMKQAQQMQEKMQRMQEEIAQLEVTGESGAGLVKVTINGAHNCRRVEVDPSLLEDDKDMLEDLIAAAFNDAARRIAETQKEKMAAVSSGMQLPPGFKMPF</sequence>
<reference key="1">
    <citation type="journal article" date="2006" name="Genome Res.">
        <title>Massive genome erosion and functional adaptations provide insights into the symbiotic lifestyle of Sodalis glossinidius in the tsetse host.</title>
        <authorList>
            <person name="Toh H."/>
            <person name="Weiss B.L."/>
            <person name="Perkin S.A.H."/>
            <person name="Yamashita A."/>
            <person name="Oshima K."/>
            <person name="Hattori M."/>
            <person name="Aksoy S."/>
        </authorList>
    </citation>
    <scope>NUCLEOTIDE SEQUENCE [LARGE SCALE GENOMIC DNA]</scope>
    <source>
        <strain>morsitans</strain>
    </source>
</reference>
<dbReference type="EMBL" id="AP008232">
    <property type="protein sequence ID" value="BAE73965.1"/>
    <property type="molecule type" value="Genomic_DNA"/>
</dbReference>
<dbReference type="RefSeq" id="WP_011410553.1">
    <property type="nucleotide sequence ID" value="NC_007712.1"/>
</dbReference>
<dbReference type="SMR" id="Q2NV60"/>
<dbReference type="STRING" id="343509.SG0690"/>
<dbReference type="KEGG" id="sgl:SG0690"/>
<dbReference type="eggNOG" id="COG0718">
    <property type="taxonomic scope" value="Bacteria"/>
</dbReference>
<dbReference type="HOGENOM" id="CLU_140930_0_0_6"/>
<dbReference type="OrthoDB" id="9808738at2"/>
<dbReference type="BioCyc" id="SGLO343509:SGP1_RS05880-MONOMER"/>
<dbReference type="Proteomes" id="UP000001932">
    <property type="component" value="Chromosome"/>
</dbReference>
<dbReference type="GO" id="GO:0043590">
    <property type="term" value="C:bacterial nucleoid"/>
    <property type="evidence" value="ECO:0007669"/>
    <property type="project" value="UniProtKB-UniRule"/>
</dbReference>
<dbReference type="GO" id="GO:0005829">
    <property type="term" value="C:cytosol"/>
    <property type="evidence" value="ECO:0007669"/>
    <property type="project" value="TreeGrafter"/>
</dbReference>
<dbReference type="GO" id="GO:0003677">
    <property type="term" value="F:DNA binding"/>
    <property type="evidence" value="ECO:0007669"/>
    <property type="project" value="UniProtKB-UniRule"/>
</dbReference>
<dbReference type="FunFam" id="3.30.1310.10:FF:000001">
    <property type="entry name" value="Nucleoid-associated protein YbaB"/>
    <property type="match status" value="1"/>
</dbReference>
<dbReference type="Gene3D" id="3.30.1310.10">
    <property type="entry name" value="Nucleoid-associated protein YbaB-like domain"/>
    <property type="match status" value="1"/>
</dbReference>
<dbReference type="HAMAP" id="MF_00274">
    <property type="entry name" value="DNA_YbaB_EbfC"/>
    <property type="match status" value="1"/>
</dbReference>
<dbReference type="InterPro" id="IPR036894">
    <property type="entry name" value="YbaB-like_sf"/>
</dbReference>
<dbReference type="InterPro" id="IPR004401">
    <property type="entry name" value="YbaB/EbfC"/>
</dbReference>
<dbReference type="NCBIfam" id="TIGR00103">
    <property type="entry name" value="DNA_YbaB_EbfC"/>
    <property type="match status" value="1"/>
</dbReference>
<dbReference type="PANTHER" id="PTHR33449">
    <property type="entry name" value="NUCLEOID-ASSOCIATED PROTEIN YBAB"/>
    <property type="match status" value="1"/>
</dbReference>
<dbReference type="PANTHER" id="PTHR33449:SF1">
    <property type="entry name" value="NUCLEOID-ASSOCIATED PROTEIN YBAB"/>
    <property type="match status" value="1"/>
</dbReference>
<dbReference type="Pfam" id="PF02575">
    <property type="entry name" value="YbaB_DNA_bd"/>
    <property type="match status" value="1"/>
</dbReference>
<dbReference type="PIRSF" id="PIRSF004555">
    <property type="entry name" value="UCP004555"/>
    <property type="match status" value="1"/>
</dbReference>
<dbReference type="SUPFAM" id="SSF82607">
    <property type="entry name" value="YbaB-like"/>
    <property type="match status" value="1"/>
</dbReference>